<sequence>MKPKTFYNLLAEQNLPLSDQQKEQFERYFELLVEWNEKINLTAITDKEEVYLKHFYDSIAPILQGLIPNETIKLLDIGAGAGFPSLPMKILYPELDVTIIDSLNKRINFLQLLAQELDLNGVHFYHGRAEDFAQDKNFRAQYDFVTARAVARMQVLSELTIPYLKVGGKLLALKASNAPEELLEAKNALNLLFSKVEDNLSYALPNRDPRYITVVEKKKETPNKYPRKAGMPNKRPL</sequence>
<organism>
    <name type="scientific">Streptococcus pneumoniae (strain 70585)</name>
    <dbReference type="NCBI Taxonomy" id="488221"/>
    <lineage>
        <taxon>Bacteria</taxon>
        <taxon>Bacillati</taxon>
        <taxon>Bacillota</taxon>
        <taxon>Bacilli</taxon>
        <taxon>Lactobacillales</taxon>
        <taxon>Streptococcaceae</taxon>
        <taxon>Streptococcus</taxon>
    </lineage>
</organism>
<dbReference type="EC" id="2.1.1.-" evidence="1"/>
<dbReference type="EMBL" id="CP000918">
    <property type="protein sequence ID" value="ACO17961.1"/>
    <property type="molecule type" value="Genomic_DNA"/>
</dbReference>
<dbReference type="RefSeq" id="WP_000802934.1">
    <property type="nucleotide sequence ID" value="NC_012468.1"/>
</dbReference>
<dbReference type="SMR" id="C1C7R5"/>
<dbReference type="GeneID" id="45653429"/>
<dbReference type="KEGG" id="snm:SP70585_1350"/>
<dbReference type="HOGENOM" id="CLU_065341_0_2_9"/>
<dbReference type="Proteomes" id="UP000002211">
    <property type="component" value="Chromosome"/>
</dbReference>
<dbReference type="GO" id="GO:0005829">
    <property type="term" value="C:cytosol"/>
    <property type="evidence" value="ECO:0007669"/>
    <property type="project" value="TreeGrafter"/>
</dbReference>
<dbReference type="GO" id="GO:0070043">
    <property type="term" value="F:rRNA (guanine-N7-)-methyltransferase activity"/>
    <property type="evidence" value="ECO:0007669"/>
    <property type="project" value="UniProtKB-UniRule"/>
</dbReference>
<dbReference type="CDD" id="cd02440">
    <property type="entry name" value="AdoMet_MTases"/>
    <property type="match status" value="1"/>
</dbReference>
<dbReference type="FunFam" id="3.40.50.150:FF:000041">
    <property type="entry name" value="Ribosomal RNA small subunit methyltransferase G"/>
    <property type="match status" value="1"/>
</dbReference>
<dbReference type="Gene3D" id="3.40.50.150">
    <property type="entry name" value="Vaccinia Virus protein VP39"/>
    <property type="match status" value="1"/>
</dbReference>
<dbReference type="HAMAP" id="MF_00074">
    <property type="entry name" value="16SrRNA_methyltr_G"/>
    <property type="match status" value="1"/>
</dbReference>
<dbReference type="InterPro" id="IPR003682">
    <property type="entry name" value="rRNA_ssu_MeTfrase_G"/>
</dbReference>
<dbReference type="InterPro" id="IPR029063">
    <property type="entry name" value="SAM-dependent_MTases_sf"/>
</dbReference>
<dbReference type="NCBIfam" id="TIGR00138">
    <property type="entry name" value="rsmG_gidB"/>
    <property type="match status" value="1"/>
</dbReference>
<dbReference type="PANTHER" id="PTHR31760">
    <property type="entry name" value="S-ADENOSYL-L-METHIONINE-DEPENDENT METHYLTRANSFERASES SUPERFAMILY PROTEIN"/>
    <property type="match status" value="1"/>
</dbReference>
<dbReference type="PANTHER" id="PTHR31760:SF0">
    <property type="entry name" value="S-ADENOSYL-L-METHIONINE-DEPENDENT METHYLTRANSFERASES SUPERFAMILY PROTEIN"/>
    <property type="match status" value="1"/>
</dbReference>
<dbReference type="Pfam" id="PF02527">
    <property type="entry name" value="GidB"/>
    <property type="match status" value="1"/>
</dbReference>
<dbReference type="PIRSF" id="PIRSF003078">
    <property type="entry name" value="GidB"/>
    <property type="match status" value="1"/>
</dbReference>
<dbReference type="SUPFAM" id="SSF53335">
    <property type="entry name" value="S-adenosyl-L-methionine-dependent methyltransferases"/>
    <property type="match status" value="1"/>
</dbReference>
<keyword id="KW-0963">Cytoplasm</keyword>
<keyword id="KW-0489">Methyltransferase</keyword>
<keyword id="KW-0698">rRNA processing</keyword>
<keyword id="KW-0949">S-adenosyl-L-methionine</keyword>
<keyword id="KW-0808">Transferase</keyword>
<protein>
    <recommendedName>
        <fullName evidence="1">Ribosomal RNA small subunit methyltransferase G</fullName>
        <ecNumber evidence="1">2.1.1.-</ecNumber>
    </recommendedName>
    <alternativeName>
        <fullName evidence="1">16S rRNA 7-methylguanosine methyltransferase</fullName>
        <shortName evidence="1">16S rRNA m7G methyltransferase</shortName>
    </alternativeName>
</protein>
<accession>C1C7R5</accession>
<feature type="chain" id="PRO_1000118200" description="Ribosomal RNA small subunit methyltransferase G">
    <location>
        <begin position="1"/>
        <end position="237"/>
    </location>
</feature>
<feature type="region of interest" description="Disordered" evidence="2">
    <location>
        <begin position="218"/>
        <end position="237"/>
    </location>
</feature>
<feature type="binding site" evidence="1">
    <location>
        <position position="78"/>
    </location>
    <ligand>
        <name>S-adenosyl-L-methionine</name>
        <dbReference type="ChEBI" id="CHEBI:59789"/>
    </ligand>
</feature>
<feature type="binding site" evidence="1">
    <location>
        <position position="83"/>
    </location>
    <ligand>
        <name>S-adenosyl-L-methionine</name>
        <dbReference type="ChEBI" id="CHEBI:59789"/>
    </ligand>
</feature>
<feature type="binding site" evidence="1">
    <location>
        <begin position="129"/>
        <end position="130"/>
    </location>
    <ligand>
        <name>S-adenosyl-L-methionine</name>
        <dbReference type="ChEBI" id="CHEBI:59789"/>
    </ligand>
</feature>
<feature type="binding site" evidence="1">
    <location>
        <position position="148"/>
    </location>
    <ligand>
        <name>S-adenosyl-L-methionine</name>
        <dbReference type="ChEBI" id="CHEBI:59789"/>
    </ligand>
</feature>
<reference key="1">
    <citation type="journal article" date="2010" name="Genome Biol.">
        <title>Structure and dynamics of the pan-genome of Streptococcus pneumoniae and closely related species.</title>
        <authorList>
            <person name="Donati C."/>
            <person name="Hiller N.L."/>
            <person name="Tettelin H."/>
            <person name="Muzzi A."/>
            <person name="Croucher N.J."/>
            <person name="Angiuoli S.V."/>
            <person name="Oggioni M."/>
            <person name="Dunning Hotopp J.C."/>
            <person name="Hu F.Z."/>
            <person name="Riley D.R."/>
            <person name="Covacci A."/>
            <person name="Mitchell T.J."/>
            <person name="Bentley S.D."/>
            <person name="Kilian M."/>
            <person name="Ehrlich G.D."/>
            <person name="Rappuoli R."/>
            <person name="Moxon E.R."/>
            <person name="Masignani V."/>
        </authorList>
    </citation>
    <scope>NUCLEOTIDE SEQUENCE [LARGE SCALE GENOMIC DNA]</scope>
    <source>
        <strain>70585</strain>
    </source>
</reference>
<proteinExistence type="inferred from homology"/>
<gene>
    <name evidence="1" type="primary">rsmG</name>
    <name type="ordered locus">SP70585_1350</name>
</gene>
<evidence type="ECO:0000255" key="1">
    <source>
        <dbReference type="HAMAP-Rule" id="MF_00074"/>
    </source>
</evidence>
<evidence type="ECO:0000256" key="2">
    <source>
        <dbReference type="SAM" id="MobiDB-lite"/>
    </source>
</evidence>
<comment type="function">
    <text evidence="1">Specifically methylates the N7 position of a guanine in 16S rRNA.</text>
</comment>
<comment type="subcellular location">
    <subcellularLocation>
        <location evidence="1">Cytoplasm</location>
    </subcellularLocation>
</comment>
<comment type="similarity">
    <text evidence="1">Belongs to the methyltransferase superfamily. RNA methyltransferase RsmG family.</text>
</comment>
<name>RSMG_STRP7</name>